<sequence>MMKIIRAKLHGIRVTNADLNYHGSITLDPEQCEMAGIYPMEFVDIWNKNSAARISTYVIFGEPGSRCCVLNGAAARTCQKGDELIIAASADISGPEKLYDIKPRILTFLPDNHVDQVLYYDVFQSEKRPYDFRIVDADKHTIESCHTWPNVDITKLRSDLAAKGWSEAEIDSFIASHFSL</sequence>
<feature type="chain" id="PRO_0000307009" description="Aspartate 1-decarboxylase beta chain" evidence="1">
    <location>
        <begin position="1"/>
        <end position="23"/>
    </location>
</feature>
<feature type="chain" id="PRO_0000307010" description="Aspartate 1-decarboxylase alpha chain" evidence="1">
    <location>
        <begin position="24"/>
        <end position="180"/>
    </location>
</feature>
<feature type="active site" description="Schiff-base intermediate with substrate; via pyruvic acid" evidence="1">
    <location>
        <position position="24"/>
    </location>
</feature>
<feature type="active site" description="Proton donor" evidence="1">
    <location>
        <position position="57"/>
    </location>
</feature>
<feature type="binding site" evidence="1">
    <location>
        <position position="56"/>
    </location>
    <ligand>
        <name>substrate</name>
    </ligand>
</feature>
<feature type="binding site" evidence="1">
    <location>
        <begin position="72"/>
        <end position="74"/>
    </location>
    <ligand>
        <name>substrate</name>
    </ligand>
</feature>
<feature type="modified residue" description="Pyruvic acid (Ser)" evidence="1">
    <location>
        <position position="24"/>
    </location>
</feature>
<name>PAND_PARM1</name>
<dbReference type="EC" id="4.1.1.11" evidence="1"/>
<dbReference type="EMBL" id="AP007255">
    <property type="protein sequence ID" value="BAE52826.1"/>
    <property type="molecule type" value="Genomic_DNA"/>
</dbReference>
<dbReference type="RefSeq" id="WP_011386375.1">
    <property type="nucleotide sequence ID" value="NC_007626.1"/>
</dbReference>
<dbReference type="SMR" id="Q2VZZ9"/>
<dbReference type="STRING" id="342108.amb4022"/>
<dbReference type="KEGG" id="mag:amb4022"/>
<dbReference type="HOGENOM" id="CLU_115305_1_0_5"/>
<dbReference type="OrthoDB" id="9803983at2"/>
<dbReference type="BRENDA" id="4.1.1.11">
    <property type="organism ID" value="7365"/>
</dbReference>
<dbReference type="UniPathway" id="UPA00028">
    <property type="reaction ID" value="UER00002"/>
</dbReference>
<dbReference type="Proteomes" id="UP000007058">
    <property type="component" value="Chromosome"/>
</dbReference>
<dbReference type="GO" id="GO:0005829">
    <property type="term" value="C:cytosol"/>
    <property type="evidence" value="ECO:0007669"/>
    <property type="project" value="TreeGrafter"/>
</dbReference>
<dbReference type="GO" id="GO:0004068">
    <property type="term" value="F:aspartate 1-decarboxylase activity"/>
    <property type="evidence" value="ECO:0007669"/>
    <property type="project" value="UniProtKB-UniRule"/>
</dbReference>
<dbReference type="GO" id="GO:0006523">
    <property type="term" value="P:alanine biosynthetic process"/>
    <property type="evidence" value="ECO:0007669"/>
    <property type="project" value="InterPro"/>
</dbReference>
<dbReference type="GO" id="GO:0015940">
    <property type="term" value="P:pantothenate biosynthetic process"/>
    <property type="evidence" value="ECO:0007669"/>
    <property type="project" value="UniProtKB-UniRule"/>
</dbReference>
<dbReference type="CDD" id="cd06919">
    <property type="entry name" value="Asp_decarbox"/>
    <property type="match status" value="1"/>
</dbReference>
<dbReference type="Gene3D" id="2.40.40.20">
    <property type="match status" value="1"/>
</dbReference>
<dbReference type="HAMAP" id="MF_00446">
    <property type="entry name" value="PanD"/>
    <property type="match status" value="1"/>
</dbReference>
<dbReference type="InterPro" id="IPR009010">
    <property type="entry name" value="Asp_de-COase-like_dom_sf"/>
</dbReference>
<dbReference type="InterPro" id="IPR003190">
    <property type="entry name" value="Asp_decarbox"/>
</dbReference>
<dbReference type="PANTHER" id="PTHR21012">
    <property type="entry name" value="ASPARTATE 1-DECARBOXYLASE"/>
    <property type="match status" value="1"/>
</dbReference>
<dbReference type="PANTHER" id="PTHR21012:SF0">
    <property type="entry name" value="ASPARTATE 1-DECARBOXYLASE"/>
    <property type="match status" value="1"/>
</dbReference>
<dbReference type="Pfam" id="PF02261">
    <property type="entry name" value="Asp_decarbox"/>
    <property type="match status" value="1"/>
</dbReference>
<dbReference type="SUPFAM" id="SSF50692">
    <property type="entry name" value="ADC-like"/>
    <property type="match status" value="1"/>
</dbReference>
<protein>
    <recommendedName>
        <fullName evidence="1">Aspartate 1-decarboxylase</fullName>
        <ecNumber evidence="1">4.1.1.11</ecNumber>
    </recommendedName>
    <alternativeName>
        <fullName evidence="1">Aspartate alpha-decarboxylase</fullName>
    </alternativeName>
    <component>
        <recommendedName>
            <fullName evidence="1">Aspartate 1-decarboxylase beta chain</fullName>
        </recommendedName>
    </component>
    <component>
        <recommendedName>
            <fullName evidence="1">Aspartate 1-decarboxylase alpha chain</fullName>
        </recommendedName>
    </component>
</protein>
<organism>
    <name type="scientific">Paramagnetospirillum magneticum (strain ATCC 700264 / AMB-1)</name>
    <name type="common">Magnetospirillum magneticum</name>
    <dbReference type="NCBI Taxonomy" id="342108"/>
    <lineage>
        <taxon>Bacteria</taxon>
        <taxon>Pseudomonadati</taxon>
        <taxon>Pseudomonadota</taxon>
        <taxon>Alphaproteobacteria</taxon>
        <taxon>Rhodospirillales</taxon>
        <taxon>Magnetospirillaceae</taxon>
        <taxon>Paramagnetospirillum</taxon>
    </lineage>
</organism>
<accession>Q2VZZ9</accession>
<gene>
    <name evidence="1" type="primary">panD</name>
    <name type="ordered locus">amb4022</name>
</gene>
<proteinExistence type="inferred from homology"/>
<comment type="function">
    <text evidence="1">Catalyzes the pyruvoyl-dependent decarboxylation of aspartate to produce beta-alanine.</text>
</comment>
<comment type="catalytic activity">
    <reaction evidence="1">
        <text>L-aspartate + H(+) = beta-alanine + CO2</text>
        <dbReference type="Rhea" id="RHEA:19497"/>
        <dbReference type="ChEBI" id="CHEBI:15378"/>
        <dbReference type="ChEBI" id="CHEBI:16526"/>
        <dbReference type="ChEBI" id="CHEBI:29991"/>
        <dbReference type="ChEBI" id="CHEBI:57966"/>
        <dbReference type="EC" id="4.1.1.11"/>
    </reaction>
</comment>
<comment type="cofactor">
    <cofactor evidence="1">
        <name>pyruvate</name>
        <dbReference type="ChEBI" id="CHEBI:15361"/>
    </cofactor>
    <text evidence="1">Binds 1 pyruvoyl group covalently per subunit.</text>
</comment>
<comment type="pathway">
    <text evidence="1">Cofactor biosynthesis; (R)-pantothenate biosynthesis; beta-alanine from L-aspartate: step 1/1.</text>
</comment>
<comment type="subunit">
    <text evidence="1">Heterooctamer of four alpha and four beta subunits.</text>
</comment>
<comment type="subcellular location">
    <subcellularLocation>
        <location evidence="1">Cytoplasm</location>
    </subcellularLocation>
</comment>
<comment type="PTM">
    <text evidence="1">Is synthesized initially as an inactive proenzyme, which is activated by self-cleavage at a specific serine bond to produce a beta-subunit with a hydroxyl group at its C-terminus and an alpha-subunit with a pyruvoyl group at its N-terminus.</text>
</comment>
<comment type="similarity">
    <text evidence="1">Belongs to the PanD family.</text>
</comment>
<reference key="1">
    <citation type="journal article" date="2005" name="DNA Res.">
        <title>Complete genome sequence of the facultative anaerobic magnetotactic bacterium Magnetospirillum sp. strain AMB-1.</title>
        <authorList>
            <person name="Matsunaga T."/>
            <person name="Okamura Y."/>
            <person name="Fukuda Y."/>
            <person name="Wahyudi A.T."/>
            <person name="Murase Y."/>
            <person name="Takeyama H."/>
        </authorList>
    </citation>
    <scope>NUCLEOTIDE SEQUENCE [LARGE SCALE GENOMIC DNA]</scope>
    <source>
        <strain>ATCC 700264 / AMB-1</strain>
    </source>
</reference>
<keyword id="KW-0068">Autocatalytic cleavage</keyword>
<keyword id="KW-0963">Cytoplasm</keyword>
<keyword id="KW-0210">Decarboxylase</keyword>
<keyword id="KW-0456">Lyase</keyword>
<keyword id="KW-0566">Pantothenate biosynthesis</keyword>
<keyword id="KW-0670">Pyruvate</keyword>
<keyword id="KW-0704">Schiff base</keyword>
<keyword id="KW-0865">Zymogen</keyword>
<evidence type="ECO:0000255" key="1">
    <source>
        <dbReference type="HAMAP-Rule" id="MF_00446"/>
    </source>
</evidence>